<reference key="1">
    <citation type="journal article" date="2010" name="Genome Biol.">
        <title>Structure and dynamics of the pan-genome of Streptococcus pneumoniae and closely related species.</title>
        <authorList>
            <person name="Donati C."/>
            <person name="Hiller N.L."/>
            <person name="Tettelin H."/>
            <person name="Muzzi A."/>
            <person name="Croucher N.J."/>
            <person name="Angiuoli S.V."/>
            <person name="Oggioni M."/>
            <person name="Dunning Hotopp J.C."/>
            <person name="Hu F.Z."/>
            <person name="Riley D.R."/>
            <person name="Covacci A."/>
            <person name="Mitchell T.J."/>
            <person name="Bentley S.D."/>
            <person name="Kilian M."/>
            <person name="Ehrlich G.D."/>
            <person name="Rappuoli R."/>
            <person name="Moxon E.R."/>
            <person name="Masignani V."/>
        </authorList>
    </citation>
    <scope>NUCLEOTIDE SEQUENCE [LARGE SCALE GENOMIC DNA]</scope>
    <source>
        <strain>70585</strain>
    </source>
</reference>
<evidence type="ECO:0000255" key="1">
    <source>
        <dbReference type="HAMAP-Rule" id="MF_00009"/>
    </source>
</evidence>
<sequence length="165" mass="19245">MYIEMVDETGQVSKEMLQQTQEILEFAAQKLGKEDKEMAVTFVTNERSHELNLEYRDTDRPTDVISLEYKPELEIAFDEEDLLENPELAEMMSEFDAYIGELFISIDKAHEQAEEYGHSFEREMGFLAVHGFLHINGYDHYTPEEEAEMFGLQEEILTAYGLTRQ</sequence>
<organism>
    <name type="scientific">Streptococcus pneumoniae (strain 70585)</name>
    <dbReference type="NCBI Taxonomy" id="488221"/>
    <lineage>
        <taxon>Bacteria</taxon>
        <taxon>Bacillati</taxon>
        <taxon>Bacillota</taxon>
        <taxon>Bacilli</taxon>
        <taxon>Lactobacillales</taxon>
        <taxon>Streptococcaceae</taxon>
        <taxon>Streptococcus</taxon>
    </lineage>
</organism>
<feature type="chain" id="PRO_1000199996" description="Endoribonuclease YbeY">
    <location>
        <begin position="1"/>
        <end position="165"/>
    </location>
</feature>
<feature type="binding site" evidence="1">
    <location>
        <position position="130"/>
    </location>
    <ligand>
        <name>Zn(2+)</name>
        <dbReference type="ChEBI" id="CHEBI:29105"/>
        <note>catalytic</note>
    </ligand>
</feature>
<feature type="binding site" evidence="1">
    <location>
        <position position="134"/>
    </location>
    <ligand>
        <name>Zn(2+)</name>
        <dbReference type="ChEBI" id="CHEBI:29105"/>
        <note>catalytic</note>
    </ligand>
</feature>
<feature type="binding site" evidence="1">
    <location>
        <position position="140"/>
    </location>
    <ligand>
        <name>Zn(2+)</name>
        <dbReference type="ChEBI" id="CHEBI:29105"/>
        <note>catalytic</note>
    </ligand>
</feature>
<dbReference type="EC" id="3.1.-.-" evidence="1"/>
<dbReference type="EMBL" id="CP000918">
    <property type="protein sequence ID" value="ACO17166.1"/>
    <property type="molecule type" value="Genomic_DNA"/>
</dbReference>
<dbReference type="RefSeq" id="WP_000275156.1">
    <property type="nucleotide sequence ID" value="NC_012468.1"/>
</dbReference>
<dbReference type="SMR" id="C1C6U4"/>
<dbReference type="GeneID" id="93739770"/>
<dbReference type="KEGG" id="snm:SP70585_1007"/>
<dbReference type="HOGENOM" id="CLU_106710_3_0_9"/>
<dbReference type="Proteomes" id="UP000002211">
    <property type="component" value="Chromosome"/>
</dbReference>
<dbReference type="GO" id="GO:0005737">
    <property type="term" value="C:cytoplasm"/>
    <property type="evidence" value="ECO:0007669"/>
    <property type="project" value="UniProtKB-SubCell"/>
</dbReference>
<dbReference type="GO" id="GO:0004222">
    <property type="term" value="F:metalloendopeptidase activity"/>
    <property type="evidence" value="ECO:0007669"/>
    <property type="project" value="InterPro"/>
</dbReference>
<dbReference type="GO" id="GO:0004521">
    <property type="term" value="F:RNA endonuclease activity"/>
    <property type="evidence" value="ECO:0007669"/>
    <property type="project" value="UniProtKB-UniRule"/>
</dbReference>
<dbReference type="GO" id="GO:0008270">
    <property type="term" value="F:zinc ion binding"/>
    <property type="evidence" value="ECO:0007669"/>
    <property type="project" value="UniProtKB-UniRule"/>
</dbReference>
<dbReference type="GO" id="GO:0006364">
    <property type="term" value="P:rRNA processing"/>
    <property type="evidence" value="ECO:0007669"/>
    <property type="project" value="UniProtKB-UniRule"/>
</dbReference>
<dbReference type="Gene3D" id="3.40.390.30">
    <property type="entry name" value="Metalloproteases ('zincins'), catalytic domain"/>
    <property type="match status" value="1"/>
</dbReference>
<dbReference type="HAMAP" id="MF_00009">
    <property type="entry name" value="Endoribonucl_YbeY"/>
    <property type="match status" value="1"/>
</dbReference>
<dbReference type="InterPro" id="IPR023091">
    <property type="entry name" value="MetalPrtase_cat_dom_sf_prd"/>
</dbReference>
<dbReference type="InterPro" id="IPR002036">
    <property type="entry name" value="YbeY"/>
</dbReference>
<dbReference type="InterPro" id="IPR020549">
    <property type="entry name" value="YbeY_CS"/>
</dbReference>
<dbReference type="NCBIfam" id="TIGR00043">
    <property type="entry name" value="rRNA maturation RNase YbeY"/>
    <property type="match status" value="1"/>
</dbReference>
<dbReference type="PANTHER" id="PTHR46986">
    <property type="entry name" value="ENDORIBONUCLEASE YBEY, CHLOROPLASTIC"/>
    <property type="match status" value="1"/>
</dbReference>
<dbReference type="PANTHER" id="PTHR46986:SF1">
    <property type="entry name" value="ENDORIBONUCLEASE YBEY, CHLOROPLASTIC"/>
    <property type="match status" value="1"/>
</dbReference>
<dbReference type="Pfam" id="PF02130">
    <property type="entry name" value="YbeY"/>
    <property type="match status" value="1"/>
</dbReference>
<dbReference type="SUPFAM" id="SSF55486">
    <property type="entry name" value="Metalloproteases ('zincins'), catalytic domain"/>
    <property type="match status" value="1"/>
</dbReference>
<dbReference type="PROSITE" id="PS01306">
    <property type="entry name" value="UPF0054"/>
    <property type="match status" value="1"/>
</dbReference>
<proteinExistence type="inferred from homology"/>
<gene>
    <name evidence="1" type="primary">ybeY</name>
    <name type="ordered locus">SP70585_1007</name>
</gene>
<protein>
    <recommendedName>
        <fullName evidence="1">Endoribonuclease YbeY</fullName>
        <ecNumber evidence="1">3.1.-.-</ecNumber>
    </recommendedName>
</protein>
<name>YBEY_STRP7</name>
<accession>C1C6U4</accession>
<comment type="function">
    <text evidence="1">Single strand-specific metallo-endoribonuclease involved in late-stage 70S ribosome quality control and in maturation of the 3' terminus of the 16S rRNA.</text>
</comment>
<comment type="cofactor">
    <cofactor evidence="1">
        <name>Zn(2+)</name>
        <dbReference type="ChEBI" id="CHEBI:29105"/>
    </cofactor>
    <text evidence="1">Binds 1 zinc ion.</text>
</comment>
<comment type="subcellular location">
    <subcellularLocation>
        <location evidence="1">Cytoplasm</location>
    </subcellularLocation>
</comment>
<comment type="similarity">
    <text evidence="1">Belongs to the endoribonuclease YbeY family.</text>
</comment>
<keyword id="KW-0963">Cytoplasm</keyword>
<keyword id="KW-0255">Endonuclease</keyword>
<keyword id="KW-0378">Hydrolase</keyword>
<keyword id="KW-0479">Metal-binding</keyword>
<keyword id="KW-0540">Nuclease</keyword>
<keyword id="KW-0690">Ribosome biogenesis</keyword>
<keyword id="KW-0698">rRNA processing</keyword>
<keyword id="KW-0862">Zinc</keyword>